<reference key="1">
    <citation type="journal article" date="2007" name="Nat. Biotechnol.">
        <title>Comparative analysis of the complete genome sequence of the plant growth-promoting bacterium Bacillus amyloliquefaciens FZB42.</title>
        <authorList>
            <person name="Chen X.H."/>
            <person name="Koumoutsi A."/>
            <person name="Scholz R."/>
            <person name="Eisenreich A."/>
            <person name="Schneider K."/>
            <person name="Heinemeyer I."/>
            <person name="Morgenstern B."/>
            <person name="Voss B."/>
            <person name="Hess W.R."/>
            <person name="Reva O."/>
            <person name="Junge H."/>
            <person name="Voigt B."/>
            <person name="Jungblut P.R."/>
            <person name="Vater J."/>
            <person name="Suessmuth R."/>
            <person name="Liesegang H."/>
            <person name="Strittmatter A."/>
            <person name="Gottschalk G."/>
            <person name="Borriss R."/>
        </authorList>
    </citation>
    <scope>NUCLEOTIDE SEQUENCE [LARGE SCALE GENOMIC DNA]</scope>
    <source>
        <strain>DSM 23117 / BGSC 10A6 / LMG 26770 / FZB42</strain>
    </source>
</reference>
<keyword id="KW-0328">Glycosyltransferase</keyword>
<keyword id="KW-0479">Metal-binding</keyword>
<keyword id="KW-0671">Queuosine biosynthesis</keyword>
<keyword id="KW-0808">Transferase</keyword>
<keyword id="KW-0819">tRNA processing</keyword>
<keyword id="KW-0862">Zinc</keyword>
<proteinExistence type="inferred from homology"/>
<evidence type="ECO:0000255" key="1">
    <source>
        <dbReference type="HAMAP-Rule" id="MF_00168"/>
    </source>
</evidence>
<protein>
    <recommendedName>
        <fullName evidence="1">Queuine tRNA-ribosyltransferase</fullName>
        <ecNumber evidence="1">2.4.2.29</ecNumber>
    </recommendedName>
    <alternativeName>
        <fullName evidence="1">Guanine insertion enzyme</fullName>
    </alternativeName>
    <alternativeName>
        <fullName evidence="1">tRNA-guanine transglycosylase</fullName>
    </alternativeName>
</protein>
<name>TGT_BACVZ</name>
<accession>A7Z766</accession>
<dbReference type="EC" id="2.4.2.29" evidence="1"/>
<dbReference type="EMBL" id="CP000560">
    <property type="protein sequence ID" value="ABS74842.1"/>
    <property type="molecule type" value="Genomic_DNA"/>
</dbReference>
<dbReference type="RefSeq" id="WP_007408186.1">
    <property type="nucleotide sequence ID" value="NC_009725.2"/>
</dbReference>
<dbReference type="SMR" id="A7Z766"/>
<dbReference type="GeneID" id="93081624"/>
<dbReference type="KEGG" id="bay:RBAM_024820"/>
<dbReference type="HOGENOM" id="CLU_022060_0_1_9"/>
<dbReference type="UniPathway" id="UPA00392"/>
<dbReference type="Proteomes" id="UP000001120">
    <property type="component" value="Chromosome"/>
</dbReference>
<dbReference type="GO" id="GO:0005829">
    <property type="term" value="C:cytosol"/>
    <property type="evidence" value="ECO:0007669"/>
    <property type="project" value="TreeGrafter"/>
</dbReference>
<dbReference type="GO" id="GO:0046872">
    <property type="term" value="F:metal ion binding"/>
    <property type="evidence" value="ECO:0007669"/>
    <property type="project" value="UniProtKB-KW"/>
</dbReference>
<dbReference type="GO" id="GO:0008479">
    <property type="term" value="F:tRNA-guanosine(34) queuine transglycosylase activity"/>
    <property type="evidence" value="ECO:0007669"/>
    <property type="project" value="UniProtKB-UniRule"/>
</dbReference>
<dbReference type="GO" id="GO:0008616">
    <property type="term" value="P:queuosine biosynthetic process"/>
    <property type="evidence" value="ECO:0007669"/>
    <property type="project" value="UniProtKB-UniRule"/>
</dbReference>
<dbReference type="GO" id="GO:0002099">
    <property type="term" value="P:tRNA wobble guanine modification"/>
    <property type="evidence" value="ECO:0007669"/>
    <property type="project" value="TreeGrafter"/>
</dbReference>
<dbReference type="GO" id="GO:0101030">
    <property type="term" value="P:tRNA-guanine transglycosylation"/>
    <property type="evidence" value="ECO:0007669"/>
    <property type="project" value="InterPro"/>
</dbReference>
<dbReference type="FunFam" id="3.20.20.105:FF:000001">
    <property type="entry name" value="Queuine tRNA-ribosyltransferase"/>
    <property type="match status" value="1"/>
</dbReference>
<dbReference type="Gene3D" id="3.20.20.105">
    <property type="entry name" value="Queuine tRNA-ribosyltransferase-like"/>
    <property type="match status" value="1"/>
</dbReference>
<dbReference type="HAMAP" id="MF_00168">
    <property type="entry name" value="Q_tRNA_Tgt"/>
    <property type="match status" value="1"/>
</dbReference>
<dbReference type="InterPro" id="IPR050076">
    <property type="entry name" value="ArchSynthase1/Queuine_TRR"/>
</dbReference>
<dbReference type="InterPro" id="IPR004803">
    <property type="entry name" value="TGT"/>
</dbReference>
<dbReference type="InterPro" id="IPR036511">
    <property type="entry name" value="TGT-like_sf"/>
</dbReference>
<dbReference type="InterPro" id="IPR002616">
    <property type="entry name" value="tRNA_ribo_trans-like"/>
</dbReference>
<dbReference type="NCBIfam" id="TIGR00430">
    <property type="entry name" value="Q_tRNA_tgt"/>
    <property type="match status" value="1"/>
</dbReference>
<dbReference type="NCBIfam" id="TIGR00449">
    <property type="entry name" value="tgt_general"/>
    <property type="match status" value="1"/>
</dbReference>
<dbReference type="PANTHER" id="PTHR46499">
    <property type="entry name" value="QUEUINE TRNA-RIBOSYLTRANSFERASE"/>
    <property type="match status" value="1"/>
</dbReference>
<dbReference type="PANTHER" id="PTHR46499:SF1">
    <property type="entry name" value="QUEUINE TRNA-RIBOSYLTRANSFERASE"/>
    <property type="match status" value="1"/>
</dbReference>
<dbReference type="Pfam" id="PF01702">
    <property type="entry name" value="TGT"/>
    <property type="match status" value="1"/>
</dbReference>
<dbReference type="SUPFAM" id="SSF51713">
    <property type="entry name" value="tRNA-guanine transglycosylase"/>
    <property type="match status" value="1"/>
</dbReference>
<organism>
    <name type="scientific">Bacillus velezensis (strain DSM 23117 / BGSC 10A6 / LMG 26770 / FZB42)</name>
    <name type="common">Bacillus amyloliquefaciens subsp. plantarum</name>
    <dbReference type="NCBI Taxonomy" id="326423"/>
    <lineage>
        <taxon>Bacteria</taxon>
        <taxon>Bacillati</taxon>
        <taxon>Bacillota</taxon>
        <taxon>Bacilli</taxon>
        <taxon>Bacillales</taxon>
        <taxon>Bacillaceae</taxon>
        <taxon>Bacillus</taxon>
        <taxon>Bacillus amyloliquefaciens group</taxon>
    </lineage>
</organism>
<feature type="chain" id="PRO_1000016763" description="Queuine tRNA-ribosyltransferase">
    <location>
        <begin position="1"/>
        <end position="381"/>
    </location>
</feature>
<feature type="region of interest" description="RNA binding" evidence="1">
    <location>
        <begin position="251"/>
        <end position="257"/>
    </location>
</feature>
<feature type="region of interest" description="RNA binding; important for wobble base 34 recognition" evidence="1">
    <location>
        <begin position="275"/>
        <end position="279"/>
    </location>
</feature>
<feature type="active site" description="Proton acceptor" evidence="1">
    <location>
        <position position="96"/>
    </location>
</feature>
<feature type="active site" description="Nucleophile" evidence="1">
    <location>
        <position position="270"/>
    </location>
</feature>
<feature type="binding site" evidence="1">
    <location>
        <begin position="96"/>
        <end position="100"/>
    </location>
    <ligand>
        <name>substrate</name>
    </ligand>
</feature>
<feature type="binding site" evidence="1">
    <location>
        <position position="150"/>
    </location>
    <ligand>
        <name>substrate</name>
    </ligand>
</feature>
<feature type="binding site" evidence="1">
    <location>
        <position position="193"/>
    </location>
    <ligand>
        <name>substrate</name>
    </ligand>
</feature>
<feature type="binding site" evidence="1">
    <location>
        <position position="220"/>
    </location>
    <ligand>
        <name>substrate</name>
    </ligand>
</feature>
<feature type="binding site" evidence="1">
    <location>
        <position position="308"/>
    </location>
    <ligand>
        <name>Zn(2+)</name>
        <dbReference type="ChEBI" id="CHEBI:29105"/>
    </ligand>
</feature>
<feature type="binding site" evidence="1">
    <location>
        <position position="310"/>
    </location>
    <ligand>
        <name>Zn(2+)</name>
        <dbReference type="ChEBI" id="CHEBI:29105"/>
    </ligand>
</feature>
<feature type="binding site" evidence="1">
    <location>
        <position position="313"/>
    </location>
    <ligand>
        <name>Zn(2+)</name>
        <dbReference type="ChEBI" id="CHEBI:29105"/>
    </ligand>
</feature>
<feature type="binding site" evidence="1">
    <location>
        <position position="339"/>
    </location>
    <ligand>
        <name>Zn(2+)</name>
        <dbReference type="ChEBI" id="CHEBI:29105"/>
    </ligand>
</feature>
<comment type="function">
    <text evidence="1">Catalyzes the base-exchange of a guanine (G) residue with the queuine precursor 7-aminomethyl-7-deazaguanine (PreQ1) at position 34 (anticodon wobble position) in tRNAs with GU(N) anticodons (tRNA-Asp, -Asn, -His and -Tyr). Catalysis occurs through a double-displacement mechanism. The nucleophile active site attacks the C1' of nucleotide 34 to detach the guanine base from the RNA, forming a covalent enzyme-RNA intermediate. The proton acceptor active site deprotonates the incoming PreQ1, allowing a nucleophilic attack on the C1' of the ribose to form the product. After dissociation, two additional enzymatic reactions on the tRNA convert PreQ1 to queuine (Q), resulting in the hypermodified nucleoside queuosine (7-(((4,5-cis-dihydroxy-2-cyclopenten-1-yl)amino)methyl)-7-deazaguanosine).</text>
</comment>
<comment type="catalytic activity">
    <reaction evidence="1">
        <text>7-aminomethyl-7-carbaguanine + guanosine(34) in tRNA = 7-aminomethyl-7-carbaguanosine(34) in tRNA + guanine</text>
        <dbReference type="Rhea" id="RHEA:24104"/>
        <dbReference type="Rhea" id="RHEA-COMP:10341"/>
        <dbReference type="Rhea" id="RHEA-COMP:10342"/>
        <dbReference type="ChEBI" id="CHEBI:16235"/>
        <dbReference type="ChEBI" id="CHEBI:58703"/>
        <dbReference type="ChEBI" id="CHEBI:74269"/>
        <dbReference type="ChEBI" id="CHEBI:82833"/>
        <dbReference type="EC" id="2.4.2.29"/>
    </reaction>
</comment>
<comment type="cofactor">
    <cofactor evidence="1">
        <name>Zn(2+)</name>
        <dbReference type="ChEBI" id="CHEBI:29105"/>
    </cofactor>
    <text evidence="1">Binds 1 zinc ion per subunit.</text>
</comment>
<comment type="pathway">
    <text evidence="1">tRNA modification; tRNA-queuosine biosynthesis.</text>
</comment>
<comment type="subunit">
    <text evidence="1">Homodimer. Within each dimer, one monomer is responsible for RNA recognition and catalysis, while the other monomer binds to the replacement base PreQ1.</text>
</comment>
<comment type="similarity">
    <text evidence="1">Belongs to the queuine tRNA-ribosyltransferase family.</text>
</comment>
<gene>
    <name evidence="1" type="primary">tgt</name>
    <name type="ordered locus">RBAM_024820</name>
</gene>
<sequence>MAEQPIRYEFIKECKQTGARLGRVHTPHGSFETPVFMPVGTLATVKTMSPDELKSMDAGIILSNTYHLWLRPGHDIVKEAGGLHKFMNWDRAILTDSGGFQVFSLSKFRNIEEEGVHFRNHLNGDKLFLSPEKAMEIQNALGSDIMMAFDECPPYPAEYDYMKRSVERTSRWAERCLEAHGRSDEQGLFGIVQGGEYEDLRTQSAKDLVSLDFPGYAIGGLSVGEPKHVMNRVLEFTTPLLPKDKPRYLMGVGSPDALIDGAIRGVDMFDCVLPTRIARNGTVFTNEGRLNMKNAKYERDFRPIDEECSCHTCKNYSRAYIRHLIRCNETFGIRLTTYHNLHFLLHLMEQVRQAIREDRLGDFREEFFERYGYNKPNAKSF</sequence>